<comment type="function">
    <text evidence="1">Catalyzes the conversion of urocanate to 4-imidazolone-5-propionate.</text>
</comment>
<comment type="catalytic activity">
    <reaction evidence="1">
        <text>4-imidazolone-5-propanoate = trans-urocanate + H2O</text>
        <dbReference type="Rhea" id="RHEA:13101"/>
        <dbReference type="ChEBI" id="CHEBI:15377"/>
        <dbReference type="ChEBI" id="CHEBI:17771"/>
        <dbReference type="ChEBI" id="CHEBI:77893"/>
        <dbReference type="EC" id="4.2.1.49"/>
    </reaction>
</comment>
<comment type="cofactor">
    <cofactor evidence="1">
        <name>NAD(+)</name>
        <dbReference type="ChEBI" id="CHEBI:57540"/>
    </cofactor>
    <text evidence="1">Binds 1 NAD(+) per subunit.</text>
</comment>
<comment type="pathway">
    <text evidence="1">Amino-acid degradation; L-histidine degradation into L-glutamate; N-formimidoyl-L-glutamate from L-histidine: step 2/3.</text>
</comment>
<comment type="subcellular location">
    <subcellularLocation>
        <location evidence="1">Cytoplasm</location>
    </subcellularLocation>
</comment>
<comment type="similarity">
    <text evidence="1">Belongs to the urocanase family.</text>
</comment>
<protein>
    <recommendedName>
        <fullName evidence="1">Urocanate hydratase</fullName>
        <shortName evidence="1">Urocanase</shortName>
        <ecNumber evidence="1">4.2.1.49</ecNumber>
    </recommendedName>
    <alternativeName>
        <fullName evidence="1">Imidazolonepropionate hydrolase</fullName>
    </alternativeName>
</protein>
<evidence type="ECO:0000255" key="1">
    <source>
        <dbReference type="HAMAP-Rule" id="MF_00577"/>
    </source>
</evidence>
<evidence type="ECO:0000256" key="2">
    <source>
        <dbReference type="SAM" id="MobiDB-lite"/>
    </source>
</evidence>
<organism>
    <name type="scientific">Brucella abortus (strain 2308)</name>
    <dbReference type="NCBI Taxonomy" id="359391"/>
    <lineage>
        <taxon>Bacteria</taxon>
        <taxon>Pseudomonadati</taxon>
        <taxon>Pseudomonadota</taxon>
        <taxon>Alphaproteobacteria</taxon>
        <taxon>Hyphomicrobiales</taxon>
        <taxon>Brucellaceae</taxon>
        <taxon>Brucella/Ochrobactrum group</taxon>
        <taxon>Brucella</taxon>
    </lineage>
</organism>
<reference key="1">
    <citation type="journal article" date="2005" name="Infect. Immun.">
        <title>Whole-genome analyses of speciation events in pathogenic Brucellae.</title>
        <authorList>
            <person name="Chain P.S."/>
            <person name="Comerci D.J."/>
            <person name="Tolmasky M.E."/>
            <person name="Larimer F.W."/>
            <person name="Malfatti S.A."/>
            <person name="Vergez L.M."/>
            <person name="Aguero F."/>
            <person name="Land M.L."/>
            <person name="Ugalde R.A."/>
            <person name="Garcia E."/>
        </authorList>
    </citation>
    <scope>NUCLEOTIDE SEQUENCE [LARGE SCALE GENOMIC DNA]</scope>
    <source>
        <strain>2308</strain>
    </source>
</reference>
<sequence>MSNPRHNEREVRSPRGDELNAKSWLTEAPLRMLMNNLDPDVAERPHELVVYGGIGRAARTWDDFDRIVATLKTLNDNETLLVQSGKPVGVFRTHKDAPRVLIANSNLVPHWANWDHFNELDKKGLAMYGQMTAGSWIYIGAQGIVQGTYETFVEAGRQHYGGNLKGRWILTGGLGGMGGAQPLAAVMAGACCLAVECDETRADFRLRTRYVDEKTHSLDEALAKIDAWTKAGEAKSIALIGNAAEIFPELVKRGVKPDIVTDQTSAHDPVHGYLPLGWTVAEWRAKQENDPKAVEKAARASMKVQVQAMLDFWNAGIPTVDYGNNIRQMALEEGLENAFAFPGFVPAYIRPLFCRGIGPYRWAALSGDPEDIAKTDAKVKELLPDNKHLHNWLDMAKERIAFQGLPARICWVGLGDRHRLGLAFNEMVRNGELKAPIVIGRDHLDSGSVASPNRETEAMKDGSDAVSDWPLLNALLNTASGATWVSLHHGGGVGMGFSQHAGMVICCDGTEDADRRLERVLWNDPATGVMRHADAGYDIALDWARKQGLRLPAILGN</sequence>
<proteinExistence type="inferred from homology"/>
<name>HUTU_BRUA2</name>
<accession>Q2YIL8</accession>
<keyword id="KW-0963">Cytoplasm</keyword>
<keyword id="KW-0369">Histidine metabolism</keyword>
<keyword id="KW-0456">Lyase</keyword>
<keyword id="KW-0520">NAD</keyword>
<keyword id="KW-1185">Reference proteome</keyword>
<dbReference type="EC" id="4.2.1.49" evidence="1"/>
<dbReference type="EMBL" id="AM040265">
    <property type="protein sequence ID" value="CAJ12469.1"/>
    <property type="molecule type" value="Genomic_DNA"/>
</dbReference>
<dbReference type="RefSeq" id="WP_002965715.1">
    <property type="nucleotide sequence ID" value="NZ_KN046823.1"/>
</dbReference>
<dbReference type="SMR" id="Q2YIL8"/>
<dbReference type="STRING" id="359391.BAB2_0303"/>
<dbReference type="GeneID" id="93015753"/>
<dbReference type="KEGG" id="bmf:BAB2_0303"/>
<dbReference type="PATRIC" id="fig|359391.11.peg.2257"/>
<dbReference type="HOGENOM" id="CLU_018868_0_1_5"/>
<dbReference type="PhylomeDB" id="Q2YIL8"/>
<dbReference type="UniPathway" id="UPA00379">
    <property type="reaction ID" value="UER00550"/>
</dbReference>
<dbReference type="Proteomes" id="UP000002719">
    <property type="component" value="Chromosome II"/>
</dbReference>
<dbReference type="GO" id="GO:0005737">
    <property type="term" value="C:cytoplasm"/>
    <property type="evidence" value="ECO:0007669"/>
    <property type="project" value="UniProtKB-SubCell"/>
</dbReference>
<dbReference type="GO" id="GO:0016153">
    <property type="term" value="F:urocanate hydratase activity"/>
    <property type="evidence" value="ECO:0007669"/>
    <property type="project" value="UniProtKB-UniRule"/>
</dbReference>
<dbReference type="GO" id="GO:0019556">
    <property type="term" value="P:L-histidine catabolic process to glutamate and formamide"/>
    <property type="evidence" value="ECO:0007669"/>
    <property type="project" value="UniProtKB-UniPathway"/>
</dbReference>
<dbReference type="GO" id="GO:0019557">
    <property type="term" value="P:L-histidine catabolic process to glutamate and formate"/>
    <property type="evidence" value="ECO:0007669"/>
    <property type="project" value="UniProtKB-UniPathway"/>
</dbReference>
<dbReference type="FunFam" id="3.40.50.10730:FF:000001">
    <property type="entry name" value="Urocanate hydratase"/>
    <property type="match status" value="1"/>
</dbReference>
<dbReference type="Gene3D" id="3.40.50.10730">
    <property type="entry name" value="Urocanase like domains"/>
    <property type="match status" value="1"/>
</dbReference>
<dbReference type="Gene3D" id="3.40.1770.10">
    <property type="entry name" value="Urocanase superfamily"/>
    <property type="match status" value="1"/>
</dbReference>
<dbReference type="HAMAP" id="MF_00577">
    <property type="entry name" value="HutU"/>
    <property type="match status" value="1"/>
</dbReference>
<dbReference type="InterPro" id="IPR055351">
    <property type="entry name" value="Urocanase"/>
</dbReference>
<dbReference type="InterPro" id="IPR023637">
    <property type="entry name" value="Urocanase-like"/>
</dbReference>
<dbReference type="InterPro" id="IPR035401">
    <property type="entry name" value="Urocanase_C"/>
</dbReference>
<dbReference type="InterPro" id="IPR038364">
    <property type="entry name" value="Urocanase_central_sf"/>
</dbReference>
<dbReference type="InterPro" id="IPR023636">
    <property type="entry name" value="Urocanase_CS"/>
</dbReference>
<dbReference type="InterPro" id="IPR035400">
    <property type="entry name" value="Urocanase_N"/>
</dbReference>
<dbReference type="InterPro" id="IPR035085">
    <property type="entry name" value="Urocanase_Rossmann-like"/>
</dbReference>
<dbReference type="InterPro" id="IPR036190">
    <property type="entry name" value="Urocanase_sf"/>
</dbReference>
<dbReference type="NCBIfam" id="TIGR01228">
    <property type="entry name" value="hutU"/>
    <property type="match status" value="1"/>
</dbReference>
<dbReference type="NCBIfam" id="NF003820">
    <property type="entry name" value="PRK05414.1"/>
    <property type="match status" value="1"/>
</dbReference>
<dbReference type="PANTHER" id="PTHR12216">
    <property type="entry name" value="UROCANATE HYDRATASE"/>
    <property type="match status" value="1"/>
</dbReference>
<dbReference type="PANTHER" id="PTHR12216:SF4">
    <property type="entry name" value="UROCANATE HYDRATASE"/>
    <property type="match status" value="1"/>
</dbReference>
<dbReference type="Pfam" id="PF01175">
    <property type="entry name" value="Urocanase"/>
    <property type="match status" value="1"/>
</dbReference>
<dbReference type="Pfam" id="PF17392">
    <property type="entry name" value="Urocanase_C"/>
    <property type="match status" value="1"/>
</dbReference>
<dbReference type="Pfam" id="PF17391">
    <property type="entry name" value="Urocanase_N"/>
    <property type="match status" value="1"/>
</dbReference>
<dbReference type="PIRSF" id="PIRSF001423">
    <property type="entry name" value="Urocanate_hydrat"/>
    <property type="match status" value="1"/>
</dbReference>
<dbReference type="SUPFAM" id="SSF111326">
    <property type="entry name" value="Urocanase"/>
    <property type="match status" value="1"/>
</dbReference>
<dbReference type="PROSITE" id="PS01233">
    <property type="entry name" value="UROCANASE"/>
    <property type="match status" value="1"/>
</dbReference>
<gene>
    <name evidence="1" type="primary">hutU</name>
    <name type="ordered locus">BAB2_0303</name>
</gene>
<feature type="chain" id="PRO_1000025124" description="Urocanate hydratase">
    <location>
        <begin position="1"/>
        <end position="557"/>
    </location>
</feature>
<feature type="region of interest" description="Disordered" evidence="2">
    <location>
        <begin position="1"/>
        <end position="20"/>
    </location>
</feature>
<feature type="active site" evidence="1">
    <location>
        <position position="410"/>
    </location>
</feature>
<feature type="binding site" evidence="1">
    <location>
        <begin position="52"/>
        <end position="53"/>
    </location>
    <ligand>
        <name>NAD(+)</name>
        <dbReference type="ChEBI" id="CHEBI:57540"/>
    </ligand>
</feature>
<feature type="binding site" evidence="1">
    <location>
        <position position="130"/>
    </location>
    <ligand>
        <name>NAD(+)</name>
        <dbReference type="ChEBI" id="CHEBI:57540"/>
    </ligand>
</feature>
<feature type="binding site" evidence="1">
    <location>
        <begin position="176"/>
        <end position="178"/>
    </location>
    <ligand>
        <name>NAD(+)</name>
        <dbReference type="ChEBI" id="CHEBI:57540"/>
    </ligand>
</feature>
<feature type="binding site" evidence="1">
    <location>
        <position position="196"/>
    </location>
    <ligand>
        <name>NAD(+)</name>
        <dbReference type="ChEBI" id="CHEBI:57540"/>
    </ligand>
</feature>
<feature type="binding site" evidence="1">
    <location>
        <position position="201"/>
    </location>
    <ligand>
        <name>NAD(+)</name>
        <dbReference type="ChEBI" id="CHEBI:57540"/>
    </ligand>
</feature>
<feature type="binding site" evidence="1">
    <location>
        <begin position="242"/>
        <end position="243"/>
    </location>
    <ligand>
        <name>NAD(+)</name>
        <dbReference type="ChEBI" id="CHEBI:57540"/>
    </ligand>
</feature>
<feature type="binding site" evidence="1">
    <location>
        <begin position="263"/>
        <end position="267"/>
    </location>
    <ligand>
        <name>NAD(+)</name>
        <dbReference type="ChEBI" id="CHEBI:57540"/>
    </ligand>
</feature>
<feature type="binding site" evidence="1">
    <location>
        <begin position="273"/>
        <end position="274"/>
    </location>
    <ligand>
        <name>NAD(+)</name>
        <dbReference type="ChEBI" id="CHEBI:57540"/>
    </ligand>
</feature>
<feature type="binding site" evidence="1">
    <location>
        <position position="322"/>
    </location>
    <ligand>
        <name>NAD(+)</name>
        <dbReference type="ChEBI" id="CHEBI:57540"/>
    </ligand>
</feature>
<feature type="binding site" evidence="1">
    <location>
        <position position="492"/>
    </location>
    <ligand>
        <name>NAD(+)</name>
        <dbReference type="ChEBI" id="CHEBI:57540"/>
    </ligand>
</feature>